<comment type="function">
    <text evidence="1">Catalyzes the attachment of threonine to tRNA(Thr) in a two-step reaction: L-threonine is first activated by ATP to form Thr-AMP and then transferred to the acceptor end of tRNA(Thr). Also activates L-serine and transfers it to tRNA(Thr) but cannot deacylate incorrectly charged amino acid; unlike most archaea the editing function is found in a freestanding protein.</text>
</comment>
<comment type="catalytic activity">
    <reaction evidence="3">
        <text>tRNA(Thr) + L-threonine + ATP = L-threonyl-tRNA(Thr) + AMP + diphosphate + H(+)</text>
        <dbReference type="Rhea" id="RHEA:24624"/>
        <dbReference type="Rhea" id="RHEA-COMP:9670"/>
        <dbReference type="Rhea" id="RHEA-COMP:9704"/>
        <dbReference type="ChEBI" id="CHEBI:15378"/>
        <dbReference type="ChEBI" id="CHEBI:30616"/>
        <dbReference type="ChEBI" id="CHEBI:33019"/>
        <dbReference type="ChEBI" id="CHEBI:57926"/>
        <dbReference type="ChEBI" id="CHEBI:78442"/>
        <dbReference type="ChEBI" id="CHEBI:78534"/>
        <dbReference type="ChEBI" id="CHEBI:456215"/>
        <dbReference type="EC" id="6.1.1.3"/>
    </reaction>
</comment>
<comment type="cofactor">
    <cofactor evidence="3">
        <name>Zn(2+)</name>
        <dbReference type="ChEBI" id="CHEBI:29105"/>
    </cofactor>
    <text evidence="3">Binds 1 zinc ion per subunit.</text>
</comment>
<comment type="subunit">
    <text evidence="1 2">Homodimer (By similarity). Probably interacts with its editing subunit (By similarity).</text>
</comment>
<comment type="subcellular location">
    <subcellularLocation>
        <location evidence="3">Cytoplasm</location>
    </subcellularLocation>
</comment>
<comment type="similarity">
    <text evidence="3">Belongs to the class-II aminoacyl-tRNA synthetase family.</text>
</comment>
<proteinExistence type="inferred from homology"/>
<reference key="1">
    <citation type="journal article" date="2009" name="Proc. Natl. Acad. Sci. U.S.A.">
        <title>Biogeography of the Sulfolobus islandicus pan-genome.</title>
        <authorList>
            <person name="Reno M.L."/>
            <person name="Held N.L."/>
            <person name="Fields C.J."/>
            <person name="Burke P.V."/>
            <person name="Whitaker R.J."/>
        </authorList>
    </citation>
    <scope>NUCLEOTIDE SEQUENCE [LARGE SCALE GENOMIC DNA]</scope>
    <source>
        <strain>M.16.27</strain>
    </source>
</reference>
<gene>
    <name evidence="4" type="primary">thrS-cat</name>
    <name evidence="3" type="synonym">thrS</name>
    <name type="ordered locus">M1627_0272</name>
</gene>
<organism>
    <name type="scientific">Saccharolobus islandicus (strain M.16.27)</name>
    <name type="common">Sulfolobus islandicus</name>
    <dbReference type="NCBI Taxonomy" id="427318"/>
    <lineage>
        <taxon>Archaea</taxon>
        <taxon>Thermoproteota</taxon>
        <taxon>Thermoprotei</taxon>
        <taxon>Sulfolobales</taxon>
        <taxon>Sulfolobaceae</taxon>
        <taxon>Saccharolobus</taxon>
    </lineage>
</organism>
<name>SYTC_SACI3</name>
<sequence>MESYKPVWLKGAVILAINLIDKGYKPVAVGLGERDFYIDVKSDTSITLDEVKKAINENVLANVPIENNQIVYKGNKVSIIEDKVSISTNLNPKYFEILNISTHHPNPNEQYVRIRGVAFETEEQLKDYLTWLEKAEETDHRLIGEKLDLFSFHEEAGSGLVLFHPKGQTIRNELIAFMREINDSMGYQEVYTSHVFKTDIWKISGHYTLYRDKLIVFNMEGDEYGVKPMNCPAHILIYKSKPRTYRDLPIRFSEFGHVYRWEKKGELYGLLRVRGFVQDDGHIFLREDQLREEIKMLISKTVEVWHKFGFKDDDIKPYLSTRPDESIGSDELWEKATNALISALQESGLKFGIKEKEGAFYGPKIDFEIRDSLGRWWQLSTIQVDFNLPERFKLEYIDKDGIKKRPVMVHRAIYGSIDRFVAILLEHFKGKLPTWLSSVQVRVLPITDEVNEYAEKVLNDMRKRRIRAEIDYAGETLSKRIKNAYDQGVPYILIVGKKEASEGTVTVRARGNIEVRNVKFEKFLELLITEIAQRDVEQTTVKALK</sequence>
<accession>C3N1B5</accession>
<protein>
    <recommendedName>
        <fullName>Threonine--tRNA ligase catalytic subunit</fullName>
        <ecNumber evidence="3">6.1.1.3</ecNumber>
    </recommendedName>
    <alternativeName>
        <fullName>Threonyl-tRNA synthetase catalytic subunit</fullName>
        <shortName>ThrRS-cat</shortName>
    </alternativeName>
</protein>
<feature type="chain" id="PRO_1000203920" description="Threonine--tRNA ligase catalytic subunit">
    <location>
        <begin position="1"/>
        <end position="545"/>
    </location>
</feature>
<feature type="region of interest" description="Catalytic" evidence="3">
    <location>
        <begin position="139"/>
        <end position="433"/>
    </location>
</feature>
<feature type="binding site" evidence="3">
    <location>
        <position position="231"/>
    </location>
    <ligand>
        <name>Zn(2+)</name>
        <dbReference type="ChEBI" id="CHEBI:29105"/>
    </ligand>
</feature>
<feature type="binding site" evidence="3">
    <location>
        <position position="282"/>
    </location>
    <ligand>
        <name>Zn(2+)</name>
        <dbReference type="ChEBI" id="CHEBI:29105"/>
    </ligand>
</feature>
<feature type="binding site" evidence="3">
    <location>
        <position position="410"/>
    </location>
    <ligand>
        <name>Zn(2+)</name>
        <dbReference type="ChEBI" id="CHEBI:29105"/>
    </ligand>
</feature>
<dbReference type="EC" id="6.1.1.3" evidence="3"/>
<dbReference type="EMBL" id="CP001401">
    <property type="protein sequence ID" value="ACP54300.1"/>
    <property type="molecule type" value="Genomic_DNA"/>
</dbReference>
<dbReference type="RefSeq" id="WP_012718361.1">
    <property type="nucleotide sequence ID" value="NC_012632.1"/>
</dbReference>
<dbReference type="SMR" id="C3N1B5"/>
<dbReference type="GeneID" id="84057818"/>
<dbReference type="KEGG" id="sim:M1627_0272"/>
<dbReference type="HOGENOM" id="CLU_008554_0_1_2"/>
<dbReference type="Proteomes" id="UP000002307">
    <property type="component" value="Chromosome"/>
</dbReference>
<dbReference type="GO" id="GO:0005737">
    <property type="term" value="C:cytoplasm"/>
    <property type="evidence" value="ECO:0007669"/>
    <property type="project" value="UniProtKB-SubCell"/>
</dbReference>
<dbReference type="GO" id="GO:0005524">
    <property type="term" value="F:ATP binding"/>
    <property type="evidence" value="ECO:0007669"/>
    <property type="project" value="UniProtKB-UniRule"/>
</dbReference>
<dbReference type="GO" id="GO:0046872">
    <property type="term" value="F:metal ion binding"/>
    <property type="evidence" value="ECO:0007669"/>
    <property type="project" value="UniProtKB-KW"/>
</dbReference>
<dbReference type="GO" id="GO:0004829">
    <property type="term" value="F:threonine-tRNA ligase activity"/>
    <property type="evidence" value="ECO:0007669"/>
    <property type="project" value="UniProtKB-UniRule"/>
</dbReference>
<dbReference type="GO" id="GO:0000049">
    <property type="term" value="F:tRNA binding"/>
    <property type="evidence" value="ECO:0007669"/>
    <property type="project" value="UniProtKB-KW"/>
</dbReference>
<dbReference type="GO" id="GO:0006435">
    <property type="term" value="P:threonyl-tRNA aminoacylation"/>
    <property type="evidence" value="ECO:0007669"/>
    <property type="project" value="UniProtKB-UniRule"/>
</dbReference>
<dbReference type="CDD" id="cd00860">
    <property type="entry name" value="ThrRS_anticodon"/>
    <property type="match status" value="1"/>
</dbReference>
<dbReference type="CDD" id="cd00771">
    <property type="entry name" value="ThrRS_core"/>
    <property type="match status" value="1"/>
</dbReference>
<dbReference type="FunFam" id="3.30.930.10:FF:000002">
    <property type="entry name" value="Threonine--tRNA ligase"/>
    <property type="match status" value="1"/>
</dbReference>
<dbReference type="FunFam" id="3.40.50.800:FF:000001">
    <property type="entry name" value="Threonine--tRNA ligase"/>
    <property type="match status" value="1"/>
</dbReference>
<dbReference type="Gene3D" id="3.40.50.800">
    <property type="entry name" value="Anticodon-binding domain"/>
    <property type="match status" value="1"/>
</dbReference>
<dbReference type="Gene3D" id="3.30.930.10">
    <property type="entry name" value="Bira Bifunctional Protein, Domain 2"/>
    <property type="match status" value="1"/>
</dbReference>
<dbReference type="HAMAP" id="MF_00184">
    <property type="entry name" value="Thr_tRNA_synth"/>
    <property type="match status" value="1"/>
</dbReference>
<dbReference type="InterPro" id="IPR002314">
    <property type="entry name" value="aa-tRNA-synt_IIb"/>
</dbReference>
<dbReference type="InterPro" id="IPR006195">
    <property type="entry name" value="aa-tRNA-synth_II"/>
</dbReference>
<dbReference type="InterPro" id="IPR045864">
    <property type="entry name" value="aa-tRNA-synth_II/BPL/LPL"/>
</dbReference>
<dbReference type="InterPro" id="IPR004154">
    <property type="entry name" value="Anticodon-bd"/>
</dbReference>
<dbReference type="InterPro" id="IPR036621">
    <property type="entry name" value="Anticodon-bd_dom_sf"/>
</dbReference>
<dbReference type="InterPro" id="IPR002320">
    <property type="entry name" value="Thr-tRNA-ligase_IIa"/>
</dbReference>
<dbReference type="InterPro" id="IPR018163">
    <property type="entry name" value="Thr/Ala-tRNA-synth_IIc_edit"/>
</dbReference>
<dbReference type="InterPro" id="IPR047246">
    <property type="entry name" value="ThrRS_anticodon"/>
</dbReference>
<dbReference type="InterPro" id="IPR033728">
    <property type="entry name" value="ThrRS_core"/>
</dbReference>
<dbReference type="NCBIfam" id="TIGR00418">
    <property type="entry name" value="thrS"/>
    <property type="match status" value="1"/>
</dbReference>
<dbReference type="PANTHER" id="PTHR11451:SF44">
    <property type="entry name" value="THREONINE--TRNA LIGASE, CHLOROPLASTIC_MITOCHONDRIAL 2"/>
    <property type="match status" value="1"/>
</dbReference>
<dbReference type="PANTHER" id="PTHR11451">
    <property type="entry name" value="THREONINE-TRNA LIGASE"/>
    <property type="match status" value="1"/>
</dbReference>
<dbReference type="Pfam" id="PF03129">
    <property type="entry name" value="HGTP_anticodon"/>
    <property type="match status" value="1"/>
</dbReference>
<dbReference type="Pfam" id="PF00587">
    <property type="entry name" value="tRNA-synt_2b"/>
    <property type="match status" value="1"/>
</dbReference>
<dbReference type="PRINTS" id="PR01047">
    <property type="entry name" value="TRNASYNTHTHR"/>
</dbReference>
<dbReference type="SUPFAM" id="SSF52954">
    <property type="entry name" value="Class II aaRS ABD-related"/>
    <property type="match status" value="1"/>
</dbReference>
<dbReference type="SUPFAM" id="SSF55681">
    <property type="entry name" value="Class II aaRS and biotin synthetases"/>
    <property type="match status" value="1"/>
</dbReference>
<dbReference type="SUPFAM" id="SSF55186">
    <property type="entry name" value="ThrRS/AlaRS common domain"/>
    <property type="match status" value="1"/>
</dbReference>
<dbReference type="PROSITE" id="PS50862">
    <property type="entry name" value="AA_TRNA_LIGASE_II"/>
    <property type="match status" value="1"/>
</dbReference>
<evidence type="ECO:0000250" key="1">
    <source>
        <dbReference type="UniProtKB" id="Q97VW8"/>
    </source>
</evidence>
<evidence type="ECO:0000250" key="2">
    <source>
        <dbReference type="UniProtKB" id="Q9YDW0"/>
    </source>
</evidence>
<evidence type="ECO:0000255" key="3">
    <source>
        <dbReference type="HAMAP-Rule" id="MF_00184"/>
    </source>
</evidence>
<evidence type="ECO:0000305" key="4"/>
<keyword id="KW-0030">Aminoacyl-tRNA synthetase</keyword>
<keyword id="KW-0067">ATP-binding</keyword>
<keyword id="KW-0963">Cytoplasm</keyword>
<keyword id="KW-0436">Ligase</keyword>
<keyword id="KW-0479">Metal-binding</keyword>
<keyword id="KW-0547">Nucleotide-binding</keyword>
<keyword id="KW-0648">Protein biosynthesis</keyword>
<keyword id="KW-0694">RNA-binding</keyword>
<keyword id="KW-0820">tRNA-binding</keyword>
<keyword id="KW-0862">Zinc</keyword>